<feature type="chain" id="PRO_1000130911" description="Photosystem II reaction center protein Z">
    <location>
        <begin position="1"/>
        <end position="62"/>
    </location>
</feature>
<feature type="transmembrane region" description="Helical" evidence="1">
    <location>
        <begin position="8"/>
        <end position="28"/>
    </location>
</feature>
<feature type="transmembrane region" description="Helical" evidence="1">
    <location>
        <begin position="41"/>
        <end position="61"/>
    </location>
</feature>
<comment type="function">
    <text evidence="1">May control the interaction of photosystem II (PSII) cores with the light-harvesting antenna, regulates electron flow through the 2 photosystem reaction centers. PSII is a light-driven water plastoquinone oxidoreductase, using light energy to abstract electrons from H(2)O, generating a proton gradient subsequently used for ATP formation.</text>
</comment>
<comment type="subunit">
    <text evidence="1">PSII is composed of 1 copy each of membrane proteins PsbA, PsbB, PsbC, PsbD, PsbE, PsbF, PsbH, PsbI, PsbJ, PsbK, PsbL, PsbM, PsbT, PsbX, PsbY, PsbZ, Psb30/Ycf12, peripheral proteins PsbO, CyanoQ (PsbQ), PsbU, PsbV and a large number of cofactors. It forms dimeric complexes.</text>
</comment>
<comment type="subcellular location">
    <subcellularLocation>
        <location evidence="1">Cellular thylakoid membrane</location>
        <topology evidence="1">Multi-pass membrane protein</topology>
    </subcellularLocation>
</comment>
<comment type="similarity">
    <text evidence="1">Belongs to the PsbZ family.</text>
</comment>
<sequence length="62" mass="6655">MTILFQLALAALVALSFLMVIGVPVAYASPTNWEQSKSLIFVGSIAWTVLVIAVGVLNFFVI</sequence>
<dbReference type="EMBL" id="CP000951">
    <property type="protein sequence ID" value="ACA98150.1"/>
    <property type="molecule type" value="Genomic_DNA"/>
</dbReference>
<dbReference type="RefSeq" id="WP_012305774.1">
    <property type="nucleotide sequence ID" value="NZ_JAHHPU010000005.1"/>
</dbReference>
<dbReference type="SMR" id="B1XLJ0"/>
<dbReference type="STRING" id="32049.SYNPCC7002_A0135"/>
<dbReference type="KEGG" id="syp:SYNPCC7002_A0135"/>
<dbReference type="eggNOG" id="ENOG5032ZB0">
    <property type="taxonomic scope" value="Bacteria"/>
</dbReference>
<dbReference type="HOGENOM" id="CLU_195286_1_0_3"/>
<dbReference type="Proteomes" id="UP000001688">
    <property type="component" value="Chromosome"/>
</dbReference>
<dbReference type="GO" id="GO:0009539">
    <property type="term" value="C:photosystem II reaction center"/>
    <property type="evidence" value="ECO:0007669"/>
    <property type="project" value="InterPro"/>
</dbReference>
<dbReference type="GO" id="GO:0031676">
    <property type="term" value="C:plasma membrane-derived thylakoid membrane"/>
    <property type="evidence" value="ECO:0007669"/>
    <property type="project" value="UniProtKB-SubCell"/>
</dbReference>
<dbReference type="GO" id="GO:0015979">
    <property type="term" value="P:photosynthesis"/>
    <property type="evidence" value="ECO:0007669"/>
    <property type="project" value="UniProtKB-UniRule"/>
</dbReference>
<dbReference type="GO" id="GO:0042549">
    <property type="term" value="P:photosystem II stabilization"/>
    <property type="evidence" value="ECO:0007669"/>
    <property type="project" value="InterPro"/>
</dbReference>
<dbReference type="Gene3D" id="1.10.287.740">
    <property type="entry name" value="Photosystem II PsbZ, reaction centre"/>
    <property type="match status" value="1"/>
</dbReference>
<dbReference type="HAMAP" id="MF_00644">
    <property type="entry name" value="PSII_PsbZ"/>
    <property type="match status" value="1"/>
</dbReference>
<dbReference type="InterPro" id="IPR002644">
    <property type="entry name" value="PSII_PsbZ"/>
</dbReference>
<dbReference type="InterPro" id="IPR036512">
    <property type="entry name" value="PSII_PsbZ_sf"/>
</dbReference>
<dbReference type="NCBIfam" id="TIGR03043">
    <property type="entry name" value="PS_II_psbZ"/>
    <property type="match status" value="1"/>
</dbReference>
<dbReference type="PANTHER" id="PTHR34971">
    <property type="entry name" value="PHOTOSYSTEM II REACTION CENTER PROTEIN Z"/>
    <property type="match status" value="1"/>
</dbReference>
<dbReference type="PANTHER" id="PTHR34971:SF2">
    <property type="entry name" value="PHOTOSYSTEM II REACTION CENTER PROTEIN Z"/>
    <property type="match status" value="1"/>
</dbReference>
<dbReference type="Pfam" id="PF01737">
    <property type="entry name" value="Ycf9"/>
    <property type="match status" value="1"/>
</dbReference>
<dbReference type="SUPFAM" id="SSF161055">
    <property type="entry name" value="PsbZ-like"/>
    <property type="match status" value="1"/>
</dbReference>
<proteinExistence type="inferred from homology"/>
<evidence type="ECO:0000255" key="1">
    <source>
        <dbReference type="HAMAP-Rule" id="MF_00644"/>
    </source>
</evidence>
<name>PSBZ_PICP2</name>
<gene>
    <name evidence="1" type="primary">psbZ</name>
    <name type="ordered locus">SYNPCC7002_A0135</name>
</gene>
<accession>B1XLJ0</accession>
<organism>
    <name type="scientific">Picosynechococcus sp. (strain ATCC 27264 / PCC 7002 / PR-6)</name>
    <name type="common">Agmenellum quadruplicatum</name>
    <dbReference type="NCBI Taxonomy" id="32049"/>
    <lineage>
        <taxon>Bacteria</taxon>
        <taxon>Bacillati</taxon>
        <taxon>Cyanobacteriota</taxon>
        <taxon>Cyanophyceae</taxon>
        <taxon>Oscillatoriophycideae</taxon>
        <taxon>Chroococcales</taxon>
        <taxon>Geminocystaceae</taxon>
        <taxon>Picosynechococcus</taxon>
    </lineage>
</organism>
<keyword id="KW-0472">Membrane</keyword>
<keyword id="KW-0602">Photosynthesis</keyword>
<keyword id="KW-0604">Photosystem II</keyword>
<keyword id="KW-0674">Reaction center</keyword>
<keyword id="KW-1185">Reference proteome</keyword>
<keyword id="KW-0793">Thylakoid</keyword>
<keyword id="KW-0812">Transmembrane</keyword>
<keyword id="KW-1133">Transmembrane helix</keyword>
<reference key="1">
    <citation type="submission" date="2008-02" db="EMBL/GenBank/DDBJ databases">
        <title>Complete sequence of Synechococcus sp. PCC 7002.</title>
        <authorList>
            <person name="Li T."/>
            <person name="Zhao J."/>
            <person name="Zhao C."/>
            <person name="Liu Z."/>
            <person name="Zhao F."/>
            <person name="Marquardt J."/>
            <person name="Nomura C.T."/>
            <person name="Persson S."/>
            <person name="Detter J.C."/>
            <person name="Richardson P.M."/>
            <person name="Lanz C."/>
            <person name="Schuster S.C."/>
            <person name="Wang J."/>
            <person name="Li S."/>
            <person name="Huang X."/>
            <person name="Cai T."/>
            <person name="Yu Z."/>
            <person name="Luo J."/>
            <person name="Zhao J."/>
            <person name="Bryant D.A."/>
        </authorList>
    </citation>
    <scope>NUCLEOTIDE SEQUENCE [LARGE SCALE GENOMIC DNA]</scope>
    <source>
        <strain>ATCC 27264 / PCC 7002 / PR-6</strain>
    </source>
</reference>
<protein>
    <recommendedName>
        <fullName evidence="1">Photosystem II reaction center protein Z</fullName>
        <shortName evidence="1">PSII-Z</shortName>
    </recommendedName>
</protein>